<organism>
    <name type="scientific">Streptococcus pyogenes serotype M3 (strain ATCC BAA-595 / MGAS315)</name>
    <dbReference type="NCBI Taxonomy" id="198466"/>
    <lineage>
        <taxon>Bacteria</taxon>
        <taxon>Bacillati</taxon>
        <taxon>Bacillota</taxon>
        <taxon>Bacilli</taxon>
        <taxon>Lactobacillales</taxon>
        <taxon>Streptococcaceae</taxon>
        <taxon>Streptococcus</taxon>
    </lineage>
</organism>
<dbReference type="EMBL" id="AE014074">
    <property type="protein sequence ID" value="AAM80243.1"/>
    <property type="molecule type" value="Genomic_DNA"/>
</dbReference>
<dbReference type="RefSeq" id="WP_002995157.1">
    <property type="nucleotide sequence ID" value="NC_004070.1"/>
</dbReference>
<dbReference type="SMR" id="P0DH10"/>
<dbReference type="KEGG" id="spg:SpyM3_1636"/>
<dbReference type="HOGENOM" id="CLU_106658_0_0_9"/>
<dbReference type="Proteomes" id="UP000000564">
    <property type="component" value="Chromosome"/>
</dbReference>
<dbReference type="Gene3D" id="3.40.50.10360">
    <property type="entry name" value="Hypothetical protein TT1679"/>
    <property type="match status" value="1"/>
</dbReference>
<dbReference type="HAMAP" id="MF_00800">
    <property type="entry name" value="UPF0340"/>
    <property type="match status" value="1"/>
</dbReference>
<dbReference type="InterPro" id="IPR028345">
    <property type="entry name" value="Antibiotic_NAT-like"/>
</dbReference>
<dbReference type="InterPro" id="IPR006340">
    <property type="entry name" value="DUF436"/>
</dbReference>
<dbReference type="NCBIfam" id="TIGR01440">
    <property type="entry name" value="TIGR01440 family protein"/>
    <property type="match status" value="1"/>
</dbReference>
<dbReference type="Pfam" id="PF04260">
    <property type="entry name" value="DUF436"/>
    <property type="match status" value="1"/>
</dbReference>
<dbReference type="PIRSF" id="PIRSF007510">
    <property type="entry name" value="UCP007510"/>
    <property type="match status" value="1"/>
</dbReference>
<dbReference type="SUPFAM" id="SSF110710">
    <property type="entry name" value="TTHA0583/YokD-like"/>
    <property type="match status" value="1"/>
</dbReference>
<reference key="1">
    <citation type="journal article" date="2002" name="Proc. Natl. Acad. Sci. U.S.A.">
        <title>Genome sequence of a serotype M3 strain of group A Streptococcus: phage-encoded toxins, the high-virulence phenotype, and clone emergence.</title>
        <authorList>
            <person name="Beres S.B."/>
            <person name="Sylva G.L."/>
            <person name="Barbian K.D."/>
            <person name="Lei B."/>
            <person name="Hoff J.S."/>
            <person name="Mammarella N.D."/>
            <person name="Liu M.-Y."/>
            <person name="Smoot J.C."/>
            <person name="Porcella S.F."/>
            <person name="Parkins L.D."/>
            <person name="Campbell D.S."/>
            <person name="Smith T.M."/>
            <person name="McCormick J.K."/>
            <person name="Leung D.Y.M."/>
            <person name="Schlievert P.M."/>
            <person name="Musser J.M."/>
        </authorList>
    </citation>
    <scope>NUCLEOTIDE SEQUENCE [LARGE SCALE GENOMIC DNA]</scope>
    <source>
        <strain>ATCC BAA-595 / MGAS315</strain>
    </source>
</reference>
<protein>
    <recommendedName>
        <fullName evidence="1">UPF0340 protein SpyM3_1636</fullName>
    </recommendedName>
</protein>
<evidence type="ECO:0000255" key="1">
    <source>
        <dbReference type="HAMAP-Rule" id="MF_00800"/>
    </source>
</evidence>
<proteinExistence type="inferred from homology"/>
<name>Y1636_STRP3</name>
<gene>
    <name type="ordered locus">SpyM3_1636</name>
</gene>
<feature type="chain" id="PRO_0000213022" description="UPF0340 protein SpyM3_1636">
    <location>
        <begin position="1"/>
        <end position="186"/>
    </location>
</feature>
<sequence>MLNNLEKQTREIVIDVVERSAIQPGNLFVLGLSSSEILGSRIGKQSSLEVGQIVVEVVLDELNKRGVHLAVQGCEHVNRALVVERHVAESKQLEIVNVVPNLHAGGSAQMAAFQLMSDPVEVEEVIAHAGLDIGDTAIGMHIKRVQIPLIPCQRELGGAHVTALASRPKLIGGARADYNMDIIRKS</sequence>
<accession>P0DH10</accession>
<accession>Q7CER1</accession>
<accession>Q8NZF5</accession>
<comment type="similarity">
    <text evidence="1">Belongs to the UPF0340 family.</text>
</comment>